<feature type="chain" id="PRO_0000073268" description="ATP synthase gamma chain">
    <location>
        <begin position="1"/>
        <end position="287"/>
    </location>
</feature>
<accession>Q8VV78</accession>
<comment type="function">
    <text evidence="1">Produces ATP from ADP in the presence of a proton gradient across the membrane. The gamma chain is believed to be important in regulating ATPase activity and the flow of protons through the CF(0) complex.</text>
</comment>
<comment type="subunit">
    <text evidence="1">F-type ATPases have 2 components, CF(1) - the catalytic core - and CF(0) - the membrane proton channel. CF(1) has five subunits: alpha(3), beta(3), gamma(1), delta(1), epsilon(1). CF(0) has three main subunits: a, b and c.</text>
</comment>
<comment type="subcellular location">
    <subcellularLocation>
        <location evidence="1">Cell inner membrane</location>
        <topology evidence="1">Peripheral membrane protein</topology>
    </subcellularLocation>
</comment>
<comment type="similarity">
    <text evidence="1">Belongs to the ATPase gamma chain family.</text>
</comment>
<proteinExistence type="inferred from homology"/>
<name>ATPG_COLMA</name>
<gene>
    <name evidence="1" type="primary">atpG</name>
</gene>
<reference key="1">
    <citation type="submission" date="1999-11" db="EMBL/GenBank/DDBJ databases">
        <title>Colwellia maris atp operon, complete sequence.</title>
        <authorList>
            <person name="Takada Y."/>
            <person name="Takiya S."/>
        </authorList>
    </citation>
    <scope>NUCLEOTIDE SEQUENCE [GENOMIC DNA]</scope>
</reference>
<sequence length="287" mass="31083">MAVGKEIKTKIASVKGTQKITSAMEMVAASKMRKAQEGMAASRPYATNIRNVIGHIALGNLEYRHPYMDEREAKRVGYIVVSSDRGLCGGLNINLFKKVLADAAEKQASGAEVEFCVIGSKATAFFNNMGAKVSAQISGLGDSPSLTDLVGSVAVMLKAYDNGEIDRLHVVYNKFVNTMTQEPTIDQLLPLPKSDDEAISHRWDYIYEPDANSLLDQLLVRYIESQVYQGVVENIACEQASRMVSMKAATDNAGDLIDDLQLVYNKARQAAITQELGEIVAGAAAVG</sequence>
<keyword id="KW-0066">ATP synthesis</keyword>
<keyword id="KW-0997">Cell inner membrane</keyword>
<keyword id="KW-1003">Cell membrane</keyword>
<keyword id="KW-0139">CF(1)</keyword>
<keyword id="KW-0375">Hydrogen ion transport</keyword>
<keyword id="KW-0406">Ion transport</keyword>
<keyword id="KW-0472">Membrane</keyword>
<keyword id="KW-0813">Transport</keyword>
<protein>
    <recommendedName>
        <fullName evidence="1">ATP synthase gamma chain</fullName>
    </recommendedName>
    <alternativeName>
        <fullName evidence="1">ATP synthase F1 sector gamma subunit</fullName>
    </alternativeName>
    <alternativeName>
        <fullName evidence="1">F-ATPase gamma subunit</fullName>
    </alternativeName>
</protein>
<organism>
    <name type="scientific">Colwellia maris</name>
    <dbReference type="NCBI Taxonomy" id="77524"/>
    <lineage>
        <taxon>Bacteria</taxon>
        <taxon>Pseudomonadati</taxon>
        <taxon>Pseudomonadota</taxon>
        <taxon>Gammaproteobacteria</taxon>
        <taxon>Alteromonadales</taxon>
        <taxon>Colwelliaceae</taxon>
        <taxon>Colwellia</taxon>
    </lineage>
</organism>
<dbReference type="EMBL" id="AB035129">
    <property type="protein sequence ID" value="BAB82483.1"/>
    <property type="molecule type" value="Genomic_DNA"/>
</dbReference>
<dbReference type="SMR" id="Q8VV78"/>
<dbReference type="GO" id="GO:0005886">
    <property type="term" value="C:plasma membrane"/>
    <property type="evidence" value="ECO:0007669"/>
    <property type="project" value="UniProtKB-SubCell"/>
</dbReference>
<dbReference type="GO" id="GO:0045259">
    <property type="term" value="C:proton-transporting ATP synthase complex"/>
    <property type="evidence" value="ECO:0007669"/>
    <property type="project" value="UniProtKB-KW"/>
</dbReference>
<dbReference type="GO" id="GO:0005524">
    <property type="term" value="F:ATP binding"/>
    <property type="evidence" value="ECO:0007669"/>
    <property type="project" value="UniProtKB-UniRule"/>
</dbReference>
<dbReference type="GO" id="GO:0046933">
    <property type="term" value="F:proton-transporting ATP synthase activity, rotational mechanism"/>
    <property type="evidence" value="ECO:0007669"/>
    <property type="project" value="UniProtKB-UniRule"/>
</dbReference>
<dbReference type="GO" id="GO:0042777">
    <property type="term" value="P:proton motive force-driven plasma membrane ATP synthesis"/>
    <property type="evidence" value="ECO:0007669"/>
    <property type="project" value="UniProtKB-UniRule"/>
</dbReference>
<dbReference type="CDD" id="cd12151">
    <property type="entry name" value="F1-ATPase_gamma"/>
    <property type="match status" value="1"/>
</dbReference>
<dbReference type="FunFam" id="1.10.287.80:FF:000005">
    <property type="entry name" value="ATP synthase gamma chain"/>
    <property type="match status" value="1"/>
</dbReference>
<dbReference type="FunFam" id="3.40.1380.10:FF:000006">
    <property type="entry name" value="ATP synthase gamma chain"/>
    <property type="match status" value="1"/>
</dbReference>
<dbReference type="Gene3D" id="3.40.1380.10">
    <property type="match status" value="1"/>
</dbReference>
<dbReference type="Gene3D" id="1.10.287.80">
    <property type="entry name" value="ATP synthase, gamma subunit, helix hairpin domain"/>
    <property type="match status" value="2"/>
</dbReference>
<dbReference type="HAMAP" id="MF_00815">
    <property type="entry name" value="ATP_synth_gamma_bact"/>
    <property type="match status" value="1"/>
</dbReference>
<dbReference type="InterPro" id="IPR035968">
    <property type="entry name" value="ATP_synth_F1_ATPase_gsu"/>
</dbReference>
<dbReference type="InterPro" id="IPR000131">
    <property type="entry name" value="ATP_synth_F1_gsu"/>
</dbReference>
<dbReference type="InterPro" id="IPR023632">
    <property type="entry name" value="ATP_synth_F1_gsu_CS"/>
</dbReference>
<dbReference type="NCBIfam" id="TIGR01146">
    <property type="entry name" value="ATPsyn_F1gamma"/>
    <property type="match status" value="1"/>
</dbReference>
<dbReference type="NCBIfam" id="NF004144">
    <property type="entry name" value="PRK05621.1-1"/>
    <property type="match status" value="1"/>
</dbReference>
<dbReference type="PANTHER" id="PTHR11693">
    <property type="entry name" value="ATP SYNTHASE GAMMA CHAIN"/>
    <property type="match status" value="1"/>
</dbReference>
<dbReference type="PANTHER" id="PTHR11693:SF22">
    <property type="entry name" value="ATP SYNTHASE SUBUNIT GAMMA, MITOCHONDRIAL"/>
    <property type="match status" value="1"/>
</dbReference>
<dbReference type="Pfam" id="PF00231">
    <property type="entry name" value="ATP-synt"/>
    <property type="match status" value="1"/>
</dbReference>
<dbReference type="PRINTS" id="PR00126">
    <property type="entry name" value="ATPASEGAMMA"/>
</dbReference>
<dbReference type="SUPFAM" id="SSF52943">
    <property type="entry name" value="ATP synthase (F1-ATPase), gamma subunit"/>
    <property type="match status" value="1"/>
</dbReference>
<dbReference type="PROSITE" id="PS00153">
    <property type="entry name" value="ATPASE_GAMMA"/>
    <property type="match status" value="1"/>
</dbReference>
<evidence type="ECO:0000255" key="1">
    <source>
        <dbReference type="HAMAP-Rule" id="MF_00815"/>
    </source>
</evidence>